<reference key="1">
    <citation type="journal article" date="2002" name="Plant Cell">
        <title>Arabidopsis A BOUT DE SOUFFLE, which is homologous with mammalian carnitine acyl carrier, is required for postembryonic growth in the light.</title>
        <authorList>
            <person name="Lawand S."/>
            <person name="Dorne A.-J."/>
            <person name="Long D."/>
            <person name="Coupland G."/>
            <person name="Mache R."/>
            <person name="Carol P."/>
        </authorList>
    </citation>
    <scope>NUCLEOTIDE SEQUENCE [MRNA]</scope>
    <scope>FUNCTION</scope>
    <scope>SUBCELLULAR LOCATION</scope>
    <source>
        <strain>cv. Columbia</strain>
        <tissue>Seedling hypocotyl</tissue>
    </source>
</reference>
<reference key="2">
    <citation type="journal article" date="1998" name="DNA Res.">
        <title>Structural analysis of Arabidopsis thaliana chromosome 5. VIII. Sequence features of the regions of 1,081,958 bp covered by seventeen physically assigned P1 and TAC clones.</title>
        <authorList>
            <person name="Asamizu E."/>
            <person name="Sato S."/>
            <person name="Kaneko T."/>
            <person name="Nakamura Y."/>
            <person name="Kotani H."/>
            <person name="Miyajima N."/>
            <person name="Tabata S."/>
        </authorList>
    </citation>
    <scope>NUCLEOTIDE SEQUENCE [LARGE SCALE GENOMIC DNA]</scope>
    <source>
        <strain>cv. Columbia</strain>
    </source>
</reference>
<reference key="3">
    <citation type="journal article" date="2017" name="Plant J.">
        <title>Araport11: a complete reannotation of the Arabidopsis thaliana reference genome.</title>
        <authorList>
            <person name="Cheng C.Y."/>
            <person name="Krishnakumar V."/>
            <person name="Chan A.P."/>
            <person name="Thibaud-Nissen F."/>
            <person name="Schobel S."/>
            <person name="Town C.D."/>
        </authorList>
    </citation>
    <scope>GENOME REANNOTATION</scope>
    <source>
        <strain>cv. Columbia</strain>
    </source>
</reference>
<reference key="4">
    <citation type="journal article" date="2003" name="Science">
        <title>Empirical analysis of transcriptional activity in the Arabidopsis genome.</title>
        <authorList>
            <person name="Yamada K."/>
            <person name="Lim J."/>
            <person name="Dale J.M."/>
            <person name="Chen H."/>
            <person name="Shinn P."/>
            <person name="Palm C.J."/>
            <person name="Southwick A.M."/>
            <person name="Wu H.C."/>
            <person name="Kim C.J."/>
            <person name="Nguyen M."/>
            <person name="Pham P.K."/>
            <person name="Cheuk R.F."/>
            <person name="Karlin-Newmann G."/>
            <person name="Liu S.X."/>
            <person name="Lam B."/>
            <person name="Sakano H."/>
            <person name="Wu T."/>
            <person name="Yu G."/>
            <person name="Miranda M."/>
            <person name="Quach H.L."/>
            <person name="Tripp M."/>
            <person name="Chang C.H."/>
            <person name="Lee J.M."/>
            <person name="Toriumi M.J."/>
            <person name="Chan M.M."/>
            <person name="Tang C.C."/>
            <person name="Onodera C.S."/>
            <person name="Deng J.M."/>
            <person name="Akiyama K."/>
            <person name="Ansari Y."/>
            <person name="Arakawa T."/>
            <person name="Banh J."/>
            <person name="Banno F."/>
            <person name="Bowser L."/>
            <person name="Brooks S.Y."/>
            <person name="Carninci P."/>
            <person name="Chao Q."/>
            <person name="Choy N."/>
            <person name="Enju A."/>
            <person name="Goldsmith A.D."/>
            <person name="Gurjal M."/>
            <person name="Hansen N.F."/>
            <person name="Hayashizaki Y."/>
            <person name="Johnson-Hopson C."/>
            <person name="Hsuan V.W."/>
            <person name="Iida K."/>
            <person name="Karnes M."/>
            <person name="Khan S."/>
            <person name="Koesema E."/>
            <person name="Ishida J."/>
            <person name="Jiang P.X."/>
            <person name="Jones T."/>
            <person name="Kawai J."/>
            <person name="Kamiya A."/>
            <person name="Meyers C."/>
            <person name="Nakajima M."/>
            <person name="Narusaka M."/>
            <person name="Seki M."/>
            <person name="Sakurai T."/>
            <person name="Satou M."/>
            <person name="Tamse R."/>
            <person name="Vaysberg M."/>
            <person name="Wallender E.K."/>
            <person name="Wong C."/>
            <person name="Yamamura Y."/>
            <person name="Yuan S."/>
            <person name="Shinozaki K."/>
            <person name="Davis R.W."/>
            <person name="Theologis A."/>
            <person name="Ecker J.R."/>
        </authorList>
    </citation>
    <scope>NUCLEOTIDE SEQUENCE [LARGE SCALE MRNA]</scope>
    <source>
        <strain>cv. Columbia</strain>
    </source>
</reference>
<reference key="5">
    <citation type="journal article" date="2004" name="Plant Cell">
        <title>Experimental analysis of the Arabidopsis mitochondrial proteome highlights signaling and regulatory components, provides assessment of targeting prediction programs, and indicates plant-specific mitochondrial proteins.</title>
        <authorList>
            <person name="Heazlewood J.L."/>
            <person name="Tonti-Filippini J.S."/>
            <person name="Gout A.M."/>
            <person name="Day D.A."/>
            <person name="Whelan J."/>
            <person name="Millar A.H."/>
        </authorList>
    </citation>
    <scope>IDENTIFICATION BY MASS SPECTROMETRY</scope>
    <scope>SUBCELLULAR LOCATION [LARGE SCALE ANALYSIS]</scope>
    <source>
        <strain>cv. Landsberg erecta</strain>
    </source>
</reference>
<reference key="6">
    <citation type="journal article" date="2004" name="Trends Plant Sci.">
        <title>The growing family of mitochondrial carriers in Arabidopsis.</title>
        <authorList>
            <person name="Picault N."/>
            <person name="Hodges M."/>
            <person name="Palmieri L."/>
            <person name="Palmieri F."/>
        </authorList>
    </citation>
    <scope>GENE FAMILY</scope>
</reference>
<reference key="7">
    <citation type="journal article" date="2013" name="Plant J.">
        <title>Arabidopsis A BOUT DE SOUFFLE is a putative mitochondrial transporter involved in photorespiratory metabolism and is required for meristem growth at ambient CO(2) levels.</title>
        <authorList>
            <person name="Eisenhut M."/>
            <person name="Planchais S."/>
            <person name="Cabassa C."/>
            <person name="Guivarc'h A."/>
            <person name="Justin A.M."/>
            <person name="Taconnat L."/>
            <person name="Renou J.P."/>
            <person name="Linka M."/>
            <person name="Gagneul D."/>
            <person name="Timm S."/>
            <person name="Bauwe H."/>
            <person name="Carol P."/>
            <person name="Weber A.P."/>
        </authorList>
    </citation>
    <scope>FUNCTION</scope>
    <scope>TISSUE SPECIFICITY</scope>
    <scope>INDUCTION BY LIGHT; NORFLURAZON AND LINCOMYCIN</scope>
    <scope>DISRUPTION PHENOTYPE</scope>
    <source>
        <strain>cv. Columbia</strain>
    </source>
</reference>
<gene>
    <name type="primary">BOU</name>
    <name type="ordered locus">At5g46800</name>
    <name type="ORF">MZA15.23</name>
</gene>
<proteinExistence type="evidence at protein level"/>
<dbReference type="EMBL" id="AJ277732">
    <property type="protein sequence ID" value="CAC38047.1"/>
    <property type="molecule type" value="mRNA"/>
</dbReference>
<dbReference type="EMBL" id="AB016882">
    <property type="protein sequence ID" value="BAB08924.1"/>
    <property type="status" value="ALT_SEQ"/>
    <property type="molecule type" value="Genomic_DNA"/>
</dbReference>
<dbReference type="EMBL" id="CP002688">
    <property type="protein sequence ID" value="AED95428.1"/>
    <property type="molecule type" value="Genomic_DNA"/>
</dbReference>
<dbReference type="EMBL" id="CP002688">
    <property type="protein sequence ID" value="ANM70893.1"/>
    <property type="molecule type" value="Genomic_DNA"/>
</dbReference>
<dbReference type="EMBL" id="CP002688">
    <property type="protein sequence ID" value="ANM70894.1"/>
    <property type="molecule type" value="Genomic_DNA"/>
</dbReference>
<dbReference type="EMBL" id="AY136374">
    <property type="protein sequence ID" value="AAM97040.1"/>
    <property type="molecule type" value="mRNA"/>
</dbReference>
<dbReference type="EMBL" id="BT000165">
    <property type="protein sequence ID" value="AAN15484.1"/>
    <property type="molecule type" value="mRNA"/>
</dbReference>
<dbReference type="RefSeq" id="NP_001332469.1">
    <property type="nucleotide sequence ID" value="NM_001344699.1"/>
</dbReference>
<dbReference type="RefSeq" id="NP_001332470.1">
    <property type="nucleotide sequence ID" value="NM_001344700.1"/>
</dbReference>
<dbReference type="RefSeq" id="NP_568670.1">
    <property type="nucleotide sequence ID" value="NM_124051.5"/>
</dbReference>
<dbReference type="SMR" id="Q93XM7"/>
<dbReference type="BioGRID" id="19972">
    <property type="interactions" value="19"/>
</dbReference>
<dbReference type="FunCoup" id="Q93XM7">
    <property type="interactions" value="3170"/>
</dbReference>
<dbReference type="STRING" id="3702.Q93XM7"/>
<dbReference type="TCDB" id="2.A.29.8.16">
    <property type="family name" value="the mitochondrial carrier (mc) family"/>
</dbReference>
<dbReference type="GlyGen" id="Q93XM7">
    <property type="glycosylation" value="1 site"/>
</dbReference>
<dbReference type="PaxDb" id="3702-AT5G46800.1"/>
<dbReference type="ProteomicsDB" id="250824"/>
<dbReference type="DNASU" id="834724"/>
<dbReference type="EnsemblPlants" id="AT5G46800.1">
    <property type="protein sequence ID" value="AT5G46800.1"/>
    <property type="gene ID" value="AT5G46800"/>
</dbReference>
<dbReference type="EnsemblPlants" id="AT5G46800.2">
    <property type="protein sequence ID" value="AT5G46800.2"/>
    <property type="gene ID" value="AT5G46800"/>
</dbReference>
<dbReference type="EnsemblPlants" id="AT5G46800.3">
    <property type="protein sequence ID" value="AT5G46800.3"/>
    <property type="gene ID" value="AT5G46800"/>
</dbReference>
<dbReference type="GeneID" id="834724"/>
<dbReference type="Gramene" id="AT5G46800.1">
    <property type="protein sequence ID" value="AT5G46800.1"/>
    <property type="gene ID" value="AT5G46800"/>
</dbReference>
<dbReference type="Gramene" id="AT5G46800.2">
    <property type="protein sequence ID" value="AT5G46800.2"/>
    <property type="gene ID" value="AT5G46800"/>
</dbReference>
<dbReference type="Gramene" id="AT5G46800.3">
    <property type="protein sequence ID" value="AT5G46800.3"/>
    <property type="gene ID" value="AT5G46800"/>
</dbReference>
<dbReference type="KEGG" id="ath:AT5G46800"/>
<dbReference type="Araport" id="AT5G46800"/>
<dbReference type="TAIR" id="AT5G46800">
    <property type="gene designation" value="BOU"/>
</dbReference>
<dbReference type="eggNOG" id="KOG0758">
    <property type="taxonomic scope" value="Eukaryota"/>
</dbReference>
<dbReference type="HOGENOM" id="CLU_015166_16_3_1"/>
<dbReference type="InParanoid" id="Q93XM7"/>
<dbReference type="OMA" id="NWAVGIP"/>
<dbReference type="OrthoDB" id="14252at2759"/>
<dbReference type="PhylomeDB" id="Q93XM7"/>
<dbReference type="CD-CODE" id="4299E36E">
    <property type="entry name" value="Nucleolus"/>
</dbReference>
<dbReference type="PRO" id="PR:Q93XM7"/>
<dbReference type="Proteomes" id="UP000006548">
    <property type="component" value="Chromosome 5"/>
</dbReference>
<dbReference type="ExpressionAtlas" id="Q93XM7">
    <property type="expression patterns" value="baseline and differential"/>
</dbReference>
<dbReference type="GO" id="GO:0009507">
    <property type="term" value="C:chloroplast"/>
    <property type="evidence" value="ECO:0007005"/>
    <property type="project" value="TAIR"/>
</dbReference>
<dbReference type="GO" id="GO:0005743">
    <property type="term" value="C:mitochondrial inner membrane"/>
    <property type="evidence" value="ECO:0007669"/>
    <property type="project" value="UniProtKB-SubCell"/>
</dbReference>
<dbReference type="GO" id="GO:0005739">
    <property type="term" value="C:mitochondrion"/>
    <property type="evidence" value="ECO:0007005"/>
    <property type="project" value="TAIR"/>
</dbReference>
<dbReference type="GO" id="GO:0009536">
    <property type="term" value="C:plastid"/>
    <property type="evidence" value="ECO:0007005"/>
    <property type="project" value="TAIR"/>
</dbReference>
<dbReference type="GO" id="GO:0006839">
    <property type="term" value="P:mitochondrial transport"/>
    <property type="evidence" value="ECO:0000314"/>
    <property type="project" value="TAIR"/>
</dbReference>
<dbReference type="FunFam" id="1.50.40.10:FF:000050">
    <property type="entry name" value="mitochondrial carnitine/acylcarnitine carrier-like protein"/>
    <property type="match status" value="1"/>
</dbReference>
<dbReference type="Gene3D" id="1.50.40.10">
    <property type="entry name" value="Mitochondrial carrier domain"/>
    <property type="match status" value="1"/>
</dbReference>
<dbReference type="InterPro" id="IPR050567">
    <property type="entry name" value="Mitochondrial_Carrier"/>
</dbReference>
<dbReference type="InterPro" id="IPR018108">
    <property type="entry name" value="Mitochondrial_sb/sol_carrier"/>
</dbReference>
<dbReference type="InterPro" id="IPR023395">
    <property type="entry name" value="Mt_carrier_dom_sf"/>
</dbReference>
<dbReference type="PANTHER" id="PTHR45624">
    <property type="entry name" value="MITOCHONDRIAL BASIC AMINO ACIDS TRANSPORTER-RELATED"/>
    <property type="match status" value="1"/>
</dbReference>
<dbReference type="PANTHER" id="PTHR45624:SF12">
    <property type="entry name" value="MITOCHONDRIAL ORNITHINE TRANSPORTER 1"/>
    <property type="match status" value="1"/>
</dbReference>
<dbReference type="Pfam" id="PF00153">
    <property type="entry name" value="Mito_carr"/>
    <property type="match status" value="3"/>
</dbReference>
<dbReference type="SUPFAM" id="SSF103506">
    <property type="entry name" value="Mitochondrial carrier"/>
    <property type="match status" value="1"/>
</dbReference>
<dbReference type="PROSITE" id="PS50920">
    <property type="entry name" value="SOLCAR"/>
    <property type="match status" value="3"/>
</dbReference>
<comment type="function">
    <text evidence="2 4">Involved in photorespiratory metabolism. Acts probably as a carrier for a glycine decarboxylase (GDC) cofactor or, alternatively, may act as a mitochondrial glycine shuttle. Involved in the transition from the embryonic stage to the juvenile autotrophic stage.</text>
</comment>
<comment type="subcellular location">
    <subcellularLocation>
        <location evidence="2 3">Mitochondrion inner membrane</location>
        <topology evidence="2 3">Multi-pass membrane protein</topology>
    </subcellularLocation>
</comment>
<comment type="tissue specificity">
    <text evidence="4">High expression in cotyledons, leaves, flowers and developing siliques. Lower expression in roots and maturing siliques. Not detected in meristematic tissues.</text>
</comment>
<comment type="developmental stage">
    <text>Detected two days after germination and reached a maximum at three days of growth.</text>
</comment>
<comment type="induction">
    <text evidence="4">Up-regulated by light and down-regulated by norflurazon and lincomycin. Low expression in the dark.</text>
</comment>
<comment type="disruption phenotype">
    <text evidence="4">Chlorotic leaves and impaired growth when grown under ambient air, but normal growth under CO(2)-enriched air.</text>
</comment>
<comment type="similarity">
    <text evidence="5">Belongs to the mitochondrial carrier (TC 2.A.29) family.</text>
</comment>
<comment type="sequence caution" evidence="5">
    <conflict type="erroneous gene model prediction">
        <sequence resource="EMBL-CDS" id="BAB08924"/>
    </conflict>
</comment>
<keyword id="KW-0472">Membrane</keyword>
<keyword id="KW-0496">Mitochondrion</keyword>
<keyword id="KW-0999">Mitochondrion inner membrane</keyword>
<keyword id="KW-1185">Reference proteome</keyword>
<keyword id="KW-0677">Repeat</keyword>
<keyword id="KW-0812">Transmembrane</keyword>
<keyword id="KW-1133">Transmembrane helix</keyword>
<keyword id="KW-0813">Transport</keyword>
<name>MCAT_ARATH</name>
<accession>Q93XM7</accession>
<accession>Q9FIP5</accession>
<feature type="chain" id="PRO_0000090634" description="Mitochondrial carnitine/acylcarnitine carrier-like protein">
    <location>
        <begin position="1"/>
        <end position="300"/>
    </location>
</feature>
<feature type="transmembrane region" description="Helical; Name=1" evidence="1">
    <location>
        <begin position="8"/>
        <end position="28"/>
    </location>
</feature>
<feature type="transmembrane region" description="Helical; Name=2" evidence="1">
    <location>
        <begin position="64"/>
        <end position="84"/>
    </location>
</feature>
<feature type="transmembrane region" description="Helical; Name=3" evidence="1">
    <location>
        <begin position="108"/>
        <end position="128"/>
    </location>
</feature>
<feature type="transmembrane region" description="Helical; Name=4" evidence="1">
    <location>
        <begin position="176"/>
        <end position="195"/>
    </location>
</feature>
<feature type="transmembrane region" description="Helical; Name=5" evidence="1">
    <location>
        <begin position="211"/>
        <end position="231"/>
    </location>
</feature>
<feature type="transmembrane region" description="Helical; Name=6" evidence="1">
    <location>
        <begin position="273"/>
        <end position="292"/>
    </location>
</feature>
<feature type="repeat" description="Solcar 1">
    <location>
        <begin position="2"/>
        <end position="93"/>
    </location>
</feature>
<feature type="repeat" description="Solcar 2">
    <location>
        <begin position="102"/>
        <end position="201"/>
    </location>
</feature>
<feature type="repeat" description="Solcar 3">
    <location>
        <begin position="211"/>
        <end position="298"/>
    </location>
</feature>
<organism>
    <name type="scientific">Arabidopsis thaliana</name>
    <name type="common">Mouse-ear cress</name>
    <dbReference type="NCBI Taxonomy" id="3702"/>
    <lineage>
        <taxon>Eukaryota</taxon>
        <taxon>Viridiplantae</taxon>
        <taxon>Streptophyta</taxon>
        <taxon>Embryophyta</taxon>
        <taxon>Tracheophyta</taxon>
        <taxon>Spermatophyta</taxon>
        <taxon>Magnoliopsida</taxon>
        <taxon>eudicotyledons</taxon>
        <taxon>Gunneridae</taxon>
        <taxon>Pentapetalae</taxon>
        <taxon>rosids</taxon>
        <taxon>malvids</taxon>
        <taxon>Brassicales</taxon>
        <taxon>Brassicaceae</taxon>
        <taxon>Camelineae</taxon>
        <taxon>Arabidopsis</taxon>
    </lineage>
</organism>
<sequence>MADAWKDLASGTVGGAAQLVVGHPFDTIKVKLQSQPTPAPGQLPRYTGAIDAVKQTVASEGTKGLYKGMGAPLATVAAFNAVLFTVRGQMEGLLRSEAGVPLTISQQFVAGAGAGFAVSFLACPTELIKCRLQAQGALAGASTTSSVVAAVKYGGPMDVARHVLRSEGGARGLFKGLFPTFAREVPGNATMFAAYEAFKRFLAGGSDTSSLGQGSLIMAGGVAGASFWGIVYPTDVVKSVLQVDDYKNPRYTGSMDAFRKILKSEGVKGLYKGFGPAMARSVPANAACFLAYEMTRSSLG</sequence>
<protein>
    <recommendedName>
        <fullName>Mitochondrial carnitine/acylcarnitine carrier-like protein</fullName>
    </recommendedName>
    <alternativeName>
        <fullName>Carnitine/acylcarnitine translocase-like protein</fullName>
        <shortName>CAC-like protein</shortName>
    </alternativeName>
    <alternativeName>
        <fullName>Protein A BOUT DE SOUFFLE</fullName>
    </alternativeName>
</protein>
<evidence type="ECO:0000255" key="1"/>
<evidence type="ECO:0000269" key="2">
    <source>
    </source>
</evidence>
<evidence type="ECO:0000269" key="3">
    <source>
    </source>
</evidence>
<evidence type="ECO:0000269" key="4">
    <source>
    </source>
</evidence>
<evidence type="ECO:0000305" key="5"/>